<protein>
    <recommendedName>
        <fullName evidence="1">Ribosomal protein uS12 methylthiotransferase RimO</fullName>
        <shortName evidence="1">uS12 MTTase</shortName>
        <shortName evidence="1">uS12 methylthiotransferase</shortName>
        <ecNumber evidence="1">2.8.4.4</ecNumber>
    </recommendedName>
    <alternativeName>
        <fullName evidence="1">Ribosomal protein uS12 (aspartate-C(3))-methylthiotransferase</fullName>
    </alternativeName>
    <alternativeName>
        <fullName evidence="1">Ribosome maturation factor RimO</fullName>
    </alternativeName>
</protein>
<comment type="function">
    <text evidence="1">Catalyzes the methylthiolation of an aspartic acid residue of ribosomal protein uS12.</text>
</comment>
<comment type="catalytic activity">
    <reaction evidence="1">
        <text>L-aspartate(89)-[ribosomal protein uS12]-hydrogen + (sulfur carrier)-SH + AH2 + 2 S-adenosyl-L-methionine = 3-methylsulfanyl-L-aspartate(89)-[ribosomal protein uS12]-hydrogen + (sulfur carrier)-H + 5'-deoxyadenosine + L-methionine + A + S-adenosyl-L-homocysteine + 2 H(+)</text>
        <dbReference type="Rhea" id="RHEA:37087"/>
        <dbReference type="Rhea" id="RHEA-COMP:10460"/>
        <dbReference type="Rhea" id="RHEA-COMP:10461"/>
        <dbReference type="Rhea" id="RHEA-COMP:14737"/>
        <dbReference type="Rhea" id="RHEA-COMP:14739"/>
        <dbReference type="ChEBI" id="CHEBI:13193"/>
        <dbReference type="ChEBI" id="CHEBI:15378"/>
        <dbReference type="ChEBI" id="CHEBI:17319"/>
        <dbReference type="ChEBI" id="CHEBI:17499"/>
        <dbReference type="ChEBI" id="CHEBI:29917"/>
        <dbReference type="ChEBI" id="CHEBI:29961"/>
        <dbReference type="ChEBI" id="CHEBI:57844"/>
        <dbReference type="ChEBI" id="CHEBI:57856"/>
        <dbReference type="ChEBI" id="CHEBI:59789"/>
        <dbReference type="ChEBI" id="CHEBI:64428"/>
        <dbReference type="ChEBI" id="CHEBI:73599"/>
        <dbReference type="EC" id="2.8.4.4"/>
    </reaction>
</comment>
<comment type="cofactor">
    <cofactor evidence="1">
        <name>[4Fe-4S] cluster</name>
        <dbReference type="ChEBI" id="CHEBI:49883"/>
    </cofactor>
    <text evidence="1">Binds 2 [4Fe-4S] clusters. One cluster is coordinated with 3 cysteines and an exchangeable S-adenosyl-L-methionine.</text>
</comment>
<comment type="subcellular location">
    <subcellularLocation>
        <location evidence="1">Cytoplasm</location>
    </subcellularLocation>
</comment>
<comment type="similarity">
    <text evidence="1">Belongs to the methylthiotransferase family. RimO subfamily.</text>
</comment>
<reference key="1">
    <citation type="journal article" date="2009" name="PLoS Genet.">
        <title>Organised genome dynamics in the Escherichia coli species results in highly diverse adaptive paths.</title>
        <authorList>
            <person name="Touchon M."/>
            <person name="Hoede C."/>
            <person name="Tenaillon O."/>
            <person name="Barbe V."/>
            <person name="Baeriswyl S."/>
            <person name="Bidet P."/>
            <person name="Bingen E."/>
            <person name="Bonacorsi S."/>
            <person name="Bouchier C."/>
            <person name="Bouvet O."/>
            <person name="Calteau A."/>
            <person name="Chiapello H."/>
            <person name="Clermont O."/>
            <person name="Cruveiller S."/>
            <person name="Danchin A."/>
            <person name="Diard M."/>
            <person name="Dossat C."/>
            <person name="Karoui M.E."/>
            <person name="Frapy E."/>
            <person name="Garry L."/>
            <person name="Ghigo J.M."/>
            <person name="Gilles A.M."/>
            <person name="Johnson J."/>
            <person name="Le Bouguenec C."/>
            <person name="Lescat M."/>
            <person name="Mangenot S."/>
            <person name="Martinez-Jehanne V."/>
            <person name="Matic I."/>
            <person name="Nassif X."/>
            <person name="Oztas S."/>
            <person name="Petit M.A."/>
            <person name="Pichon C."/>
            <person name="Rouy Z."/>
            <person name="Ruf C.S."/>
            <person name="Schneider D."/>
            <person name="Tourret J."/>
            <person name="Vacherie B."/>
            <person name="Vallenet D."/>
            <person name="Medigue C."/>
            <person name="Rocha E.P.C."/>
            <person name="Denamur E."/>
        </authorList>
    </citation>
    <scope>NUCLEOTIDE SEQUENCE [LARGE SCALE GENOMIC DNA]</scope>
    <source>
        <strain>S88 / ExPEC</strain>
    </source>
</reference>
<proteinExistence type="inferred from homology"/>
<organism>
    <name type="scientific">Escherichia coli O45:K1 (strain S88 / ExPEC)</name>
    <dbReference type="NCBI Taxonomy" id="585035"/>
    <lineage>
        <taxon>Bacteria</taxon>
        <taxon>Pseudomonadati</taxon>
        <taxon>Pseudomonadota</taxon>
        <taxon>Gammaproteobacteria</taxon>
        <taxon>Enterobacterales</taxon>
        <taxon>Enterobacteriaceae</taxon>
        <taxon>Escherichia</taxon>
    </lineage>
</organism>
<name>RIMO_ECO45</name>
<accession>B7MGU2</accession>
<feature type="chain" id="PRO_0000374826" description="Ribosomal protein uS12 methylthiotransferase RimO">
    <location>
        <begin position="1"/>
        <end position="441"/>
    </location>
</feature>
<feature type="domain" description="MTTase N-terminal" evidence="1">
    <location>
        <begin position="8"/>
        <end position="118"/>
    </location>
</feature>
<feature type="domain" description="Radical SAM core" evidence="2">
    <location>
        <begin position="136"/>
        <end position="373"/>
    </location>
</feature>
<feature type="domain" description="TRAM" evidence="1">
    <location>
        <begin position="376"/>
        <end position="441"/>
    </location>
</feature>
<feature type="binding site" evidence="1">
    <location>
        <position position="17"/>
    </location>
    <ligand>
        <name>[4Fe-4S] cluster</name>
        <dbReference type="ChEBI" id="CHEBI:49883"/>
        <label>1</label>
    </ligand>
</feature>
<feature type="binding site" evidence="1">
    <location>
        <position position="53"/>
    </location>
    <ligand>
        <name>[4Fe-4S] cluster</name>
        <dbReference type="ChEBI" id="CHEBI:49883"/>
        <label>1</label>
    </ligand>
</feature>
<feature type="binding site" evidence="1">
    <location>
        <position position="82"/>
    </location>
    <ligand>
        <name>[4Fe-4S] cluster</name>
        <dbReference type="ChEBI" id="CHEBI:49883"/>
        <label>1</label>
    </ligand>
</feature>
<feature type="binding site" evidence="1">
    <location>
        <position position="150"/>
    </location>
    <ligand>
        <name>[4Fe-4S] cluster</name>
        <dbReference type="ChEBI" id="CHEBI:49883"/>
        <label>2</label>
        <note>4Fe-4S-S-AdoMet</note>
    </ligand>
</feature>
<feature type="binding site" evidence="1">
    <location>
        <position position="154"/>
    </location>
    <ligand>
        <name>[4Fe-4S] cluster</name>
        <dbReference type="ChEBI" id="CHEBI:49883"/>
        <label>2</label>
        <note>4Fe-4S-S-AdoMet</note>
    </ligand>
</feature>
<feature type="binding site" evidence="1">
    <location>
        <position position="157"/>
    </location>
    <ligand>
        <name>[4Fe-4S] cluster</name>
        <dbReference type="ChEBI" id="CHEBI:49883"/>
        <label>2</label>
        <note>4Fe-4S-S-AdoMet</note>
    </ligand>
</feature>
<keyword id="KW-0004">4Fe-4S</keyword>
<keyword id="KW-0963">Cytoplasm</keyword>
<keyword id="KW-0408">Iron</keyword>
<keyword id="KW-0411">Iron-sulfur</keyword>
<keyword id="KW-0479">Metal-binding</keyword>
<keyword id="KW-1185">Reference proteome</keyword>
<keyword id="KW-0949">S-adenosyl-L-methionine</keyword>
<keyword id="KW-0808">Transferase</keyword>
<sequence length="441" mass="49581">MSKVTPQPKIGFVSLGCPKNLVDSERILTELRTEGYDVVPSYDDADMVIVNTCGFIDSAVQESLEAIGEALNENGKVIVTGCLGAKEDQIREVHPKVLEITGPHSYEQVLEHVHHYVPKPKHNPFLSLVPEQGVKLTPRHYAYLKISEGCNHRCTFCIIPSMRGDLVSRPIGEVLSEAKRLVDAGVKEILVISQDTSAYGVDVKHRTGFHNGEPVKTSMVSLCEQLSKLGIWTRLHYVYPYPHVDDVIPLMAEGKILPYLDIPLQHASPRILKLMKRPGSVDRQLARIKQWRKICPELTLRSTFIVGFPGETEEDFQMLLDFLKEARLDRVGCFKYSPVEGADANALPDQVPEEVKEERWNRFMQLQQQISAERLQEKVGREILVIIDEVDEEGAIGRSMADAPEIDGAVYLNGETNVKPGDILRVKVEHADEYDLWGSRV</sequence>
<gene>
    <name evidence="1" type="primary">rimO</name>
    <name type="ordered locus">ECS88_0852</name>
</gene>
<dbReference type="EC" id="2.8.4.4" evidence="1"/>
<dbReference type="EMBL" id="CU928161">
    <property type="protein sequence ID" value="CAR02190.1"/>
    <property type="molecule type" value="Genomic_DNA"/>
</dbReference>
<dbReference type="RefSeq" id="WP_000049378.1">
    <property type="nucleotide sequence ID" value="NC_011742.1"/>
</dbReference>
<dbReference type="SMR" id="B7MGU2"/>
<dbReference type="KEGG" id="ecz:ECS88_0852"/>
<dbReference type="HOGENOM" id="CLU_018697_0_0_6"/>
<dbReference type="Proteomes" id="UP000000747">
    <property type="component" value="Chromosome"/>
</dbReference>
<dbReference type="GO" id="GO:0005829">
    <property type="term" value="C:cytosol"/>
    <property type="evidence" value="ECO:0007669"/>
    <property type="project" value="TreeGrafter"/>
</dbReference>
<dbReference type="GO" id="GO:0051539">
    <property type="term" value="F:4 iron, 4 sulfur cluster binding"/>
    <property type="evidence" value="ECO:0007669"/>
    <property type="project" value="UniProtKB-UniRule"/>
</dbReference>
<dbReference type="GO" id="GO:0035599">
    <property type="term" value="F:aspartic acid methylthiotransferase activity"/>
    <property type="evidence" value="ECO:0007669"/>
    <property type="project" value="TreeGrafter"/>
</dbReference>
<dbReference type="GO" id="GO:0046872">
    <property type="term" value="F:metal ion binding"/>
    <property type="evidence" value="ECO:0007669"/>
    <property type="project" value="UniProtKB-KW"/>
</dbReference>
<dbReference type="GO" id="GO:0103039">
    <property type="term" value="F:protein methylthiotransferase activity"/>
    <property type="evidence" value="ECO:0007669"/>
    <property type="project" value="UniProtKB-EC"/>
</dbReference>
<dbReference type="GO" id="GO:0006400">
    <property type="term" value="P:tRNA modification"/>
    <property type="evidence" value="ECO:0007669"/>
    <property type="project" value="InterPro"/>
</dbReference>
<dbReference type="CDD" id="cd01335">
    <property type="entry name" value="Radical_SAM"/>
    <property type="match status" value="1"/>
</dbReference>
<dbReference type="FunFam" id="2.40.50.140:FF:000060">
    <property type="entry name" value="Ribosomal protein S12 methylthiotransferase RimO"/>
    <property type="match status" value="1"/>
</dbReference>
<dbReference type="FunFam" id="3.40.50.12160:FF:000002">
    <property type="entry name" value="Ribosomal protein S12 methylthiotransferase RimO"/>
    <property type="match status" value="1"/>
</dbReference>
<dbReference type="FunFam" id="3.80.30.20:FF:000001">
    <property type="entry name" value="tRNA-2-methylthio-N(6)-dimethylallyladenosine synthase 2"/>
    <property type="match status" value="1"/>
</dbReference>
<dbReference type="Gene3D" id="3.40.50.12160">
    <property type="entry name" value="Methylthiotransferase, N-terminal domain"/>
    <property type="match status" value="1"/>
</dbReference>
<dbReference type="Gene3D" id="2.40.50.140">
    <property type="entry name" value="Nucleic acid-binding proteins"/>
    <property type="match status" value="1"/>
</dbReference>
<dbReference type="Gene3D" id="3.80.30.20">
    <property type="entry name" value="tm_1862 like domain"/>
    <property type="match status" value="1"/>
</dbReference>
<dbReference type="HAMAP" id="MF_01865">
    <property type="entry name" value="MTTase_RimO"/>
    <property type="match status" value="1"/>
</dbReference>
<dbReference type="InterPro" id="IPR006638">
    <property type="entry name" value="Elp3/MiaA/NifB-like_rSAM"/>
</dbReference>
<dbReference type="InterPro" id="IPR005839">
    <property type="entry name" value="Methylthiotransferase"/>
</dbReference>
<dbReference type="InterPro" id="IPR020612">
    <property type="entry name" value="Methylthiotransferase_CS"/>
</dbReference>
<dbReference type="InterPro" id="IPR013848">
    <property type="entry name" value="Methylthiotransferase_N"/>
</dbReference>
<dbReference type="InterPro" id="IPR038135">
    <property type="entry name" value="Methylthiotransferase_N_sf"/>
</dbReference>
<dbReference type="InterPro" id="IPR012340">
    <property type="entry name" value="NA-bd_OB-fold"/>
</dbReference>
<dbReference type="InterPro" id="IPR005840">
    <property type="entry name" value="Ribosomal_uS12_MeSTrfase_RimO"/>
</dbReference>
<dbReference type="InterPro" id="IPR007197">
    <property type="entry name" value="rSAM"/>
</dbReference>
<dbReference type="InterPro" id="IPR023404">
    <property type="entry name" value="rSAM_horseshoe"/>
</dbReference>
<dbReference type="InterPro" id="IPR002792">
    <property type="entry name" value="TRAM_dom"/>
</dbReference>
<dbReference type="NCBIfam" id="TIGR01125">
    <property type="entry name" value="30S ribosomal protein S12 methylthiotransferase RimO"/>
    <property type="match status" value="1"/>
</dbReference>
<dbReference type="NCBIfam" id="TIGR00089">
    <property type="entry name" value="MiaB/RimO family radical SAM methylthiotransferase"/>
    <property type="match status" value="1"/>
</dbReference>
<dbReference type="PANTHER" id="PTHR43837">
    <property type="entry name" value="RIBOSOMAL PROTEIN S12 METHYLTHIOTRANSFERASE RIMO"/>
    <property type="match status" value="1"/>
</dbReference>
<dbReference type="PANTHER" id="PTHR43837:SF1">
    <property type="entry name" value="RIBOSOMAL PROTEIN US12 METHYLTHIOTRANSFERASE RIMO"/>
    <property type="match status" value="1"/>
</dbReference>
<dbReference type="Pfam" id="PF04055">
    <property type="entry name" value="Radical_SAM"/>
    <property type="match status" value="1"/>
</dbReference>
<dbReference type="Pfam" id="PF18693">
    <property type="entry name" value="TRAM_2"/>
    <property type="match status" value="1"/>
</dbReference>
<dbReference type="Pfam" id="PF00919">
    <property type="entry name" value="UPF0004"/>
    <property type="match status" value="1"/>
</dbReference>
<dbReference type="SFLD" id="SFLDG01082">
    <property type="entry name" value="B12-binding_domain_containing"/>
    <property type="match status" value="1"/>
</dbReference>
<dbReference type="SFLD" id="SFLDS00029">
    <property type="entry name" value="Radical_SAM"/>
    <property type="match status" value="1"/>
</dbReference>
<dbReference type="SFLD" id="SFLDF00274">
    <property type="entry name" value="ribosomal_protein_S12_methylth"/>
    <property type="match status" value="1"/>
</dbReference>
<dbReference type="SMART" id="SM00729">
    <property type="entry name" value="Elp3"/>
    <property type="match status" value="1"/>
</dbReference>
<dbReference type="SUPFAM" id="SSF102114">
    <property type="entry name" value="Radical SAM enzymes"/>
    <property type="match status" value="1"/>
</dbReference>
<dbReference type="PROSITE" id="PS51449">
    <property type="entry name" value="MTTASE_N"/>
    <property type="match status" value="1"/>
</dbReference>
<dbReference type="PROSITE" id="PS01278">
    <property type="entry name" value="MTTASE_RADICAL"/>
    <property type="match status" value="1"/>
</dbReference>
<dbReference type="PROSITE" id="PS51918">
    <property type="entry name" value="RADICAL_SAM"/>
    <property type="match status" value="1"/>
</dbReference>
<dbReference type="PROSITE" id="PS50926">
    <property type="entry name" value="TRAM"/>
    <property type="match status" value="1"/>
</dbReference>
<evidence type="ECO:0000255" key="1">
    <source>
        <dbReference type="HAMAP-Rule" id="MF_01865"/>
    </source>
</evidence>
<evidence type="ECO:0000255" key="2">
    <source>
        <dbReference type="PROSITE-ProRule" id="PRU01266"/>
    </source>
</evidence>